<feature type="signal peptide" evidence="2">
    <location>
        <begin position="1"/>
        <end position="30"/>
    </location>
</feature>
<feature type="propeptide" id="PRO_0000029204" evidence="1">
    <location>
        <begin position="31"/>
        <end position="319"/>
    </location>
</feature>
<feature type="chain" id="PRO_0000029205" description="A disintegrin and metalloproteinase with thrombospondin motifs 19">
    <location>
        <begin position="320"/>
        <end position="1210"/>
    </location>
</feature>
<feature type="domain" description="Peptidase M12B" evidence="5">
    <location>
        <begin position="328"/>
        <end position="548"/>
    </location>
</feature>
<feature type="domain" description="Disintegrin">
    <location>
        <begin position="549"/>
        <end position="636"/>
    </location>
</feature>
<feature type="domain" description="TSP type-1 1" evidence="3">
    <location>
        <begin position="637"/>
        <end position="689"/>
    </location>
</feature>
<feature type="domain" description="TSP type-1 2" evidence="3">
    <location>
        <begin position="918"/>
        <end position="978"/>
    </location>
</feature>
<feature type="domain" description="TSP type-1 3" evidence="3">
    <location>
        <begin position="979"/>
        <end position="1040"/>
    </location>
</feature>
<feature type="domain" description="TSP type-1 4" evidence="3">
    <location>
        <begin position="1042"/>
        <end position="1086"/>
    </location>
</feature>
<feature type="domain" description="TSP type-1 5" evidence="3">
    <location>
        <begin position="1090"/>
        <end position="1147"/>
    </location>
</feature>
<feature type="domain" description="PLAC" evidence="4">
    <location>
        <begin position="1163"/>
        <end position="1202"/>
    </location>
</feature>
<feature type="region of interest" description="Disordered" evidence="7">
    <location>
        <begin position="55"/>
        <end position="166"/>
    </location>
</feature>
<feature type="region of interest" description="Spacer">
    <location>
        <begin position="794"/>
        <end position="917"/>
    </location>
</feature>
<feature type="short sequence motif" description="Cysteine switch" evidence="1">
    <location>
        <begin position="295"/>
        <end position="302"/>
    </location>
</feature>
<feature type="compositionally biased region" description="Gly residues" evidence="7">
    <location>
        <begin position="69"/>
        <end position="78"/>
    </location>
</feature>
<feature type="compositionally biased region" description="Basic and acidic residues" evidence="7">
    <location>
        <begin position="84"/>
        <end position="98"/>
    </location>
</feature>
<feature type="compositionally biased region" description="Acidic residues" evidence="7">
    <location>
        <begin position="113"/>
        <end position="122"/>
    </location>
</feature>
<feature type="compositionally biased region" description="Polar residues" evidence="7">
    <location>
        <begin position="130"/>
        <end position="139"/>
    </location>
</feature>
<feature type="compositionally biased region" description="Pro residues" evidence="7">
    <location>
        <begin position="143"/>
        <end position="158"/>
    </location>
</feature>
<feature type="active site" evidence="5 6">
    <location>
        <position position="486"/>
    </location>
</feature>
<feature type="binding site" description="in inhibited form" evidence="1">
    <location>
        <position position="297"/>
    </location>
    <ligand>
        <name>Zn(2+)</name>
        <dbReference type="ChEBI" id="CHEBI:29105"/>
        <note>catalytic</note>
    </ligand>
</feature>
<feature type="binding site" evidence="1">
    <location>
        <position position="485"/>
    </location>
    <ligand>
        <name>Zn(2+)</name>
        <dbReference type="ChEBI" id="CHEBI:29105"/>
        <note>catalytic</note>
    </ligand>
</feature>
<feature type="binding site" evidence="1">
    <location>
        <position position="489"/>
    </location>
    <ligand>
        <name>Zn(2+)</name>
        <dbReference type="ChEBI" id="CHEBI:29105"/>
        <note>catalytic</note>
    </ligand>
</feature>
<feature type="binding site" evidence="1">
    <location>
        <position position="495"/>
    </location>
    <ligand>
        <name>Zn(2+)</name>
        <dbReference type="ChEBI" id="CHEBI:29105"/>
        <note>catalytic</note>
    </ligand>
</feature>
<feature type="glycosylation site" description="N-linked (GlcNAc...) asparagine" evidence="2">
    <location>
        <position position="54"/>
    </location>
</feature>
<feature type="glycosylation site" description="N-linked (GlcNAc...) asparagine" evidence="2">
    <location>
        <position position="263"/>
    </location>
</feature>
<feature type="glycosylation site" description="N-linked (GlcNAc...) asparagine" evidence="2">
    <location>
        <position position="800"/>
    </location>
</feature>
<feature type="glycosylation site" description="N-linked (GlcNAc...) asparagine" evidence="2">
    <location>
        <position position="910"/>
    </location>
</feature>
<feature type="glycosylation site" description="N-linked (GlcNAc...) asparagine" evidence="2">
    <location>
        <position position="931"/>
    </location>
</feature>
<feature type="glycosylation site" description="N-linked (GlcNAc...) asparagine" evidence="2">
    <location>
        <position position="952"/>
    </location>
</feature>
<feature type="glycosylation site" description="N-linked (GlcNAc...) asparagine" evidence="2">
    <location>
        <position position="1012"/>
    </location>
</feature>
<feature type="disulfide bond" evidence="1">
    <location>
        <begin position="404"/>
        <end position="469"/>
    </location>
</feature>
<feature type="disulfide bond" evidence="1">
    <location>
        <begin position="444"/>
        <end position="451"/>
    </location>
</feature>
<feature type="disulfide bond" evidence="1">
    <location>
        <begin position="463"/>
        <end position="543"/>
    </location>
</feature>
<feature type="disulfide bond" evidence="1">
    <location>
        <begin position="502"/>
        <end position="527"/>
    </location>
</feature>
<feature type="disulfide bond" evidence="1">
    <location>
        <begin position="572"/>
        <end position="596"/>
    </location>
</feature>
<feature type="disulfide bond" evidence="1">
    <location>
        <begin position="583"/>
        <end position="604"/>
    </location>
</feature>
<feature type="disulfide bond" evidence="1">
    <location>
        <begin position="591"/>
        <end position="623"/>
    </location>
</feature>
<feature type="disulfide bond" evidence="1">
    <location>
        <begin position="617"/>
        <end position="628"/>
    </location>
</feature>
<feature type="disulfide bond" evidence="1">
    <location>
        <begin position="648"/>
        <end position="683"/>
    </location>
</feature>
<feature type="disulfide bond" evidence="1">
    <location>
        <begin position="652"/>
        <end position="688"/>
    </location>
</feature>
<feature type="disulfide bond" evidence="1">
    <location>
        <begin position="663"/>
        <end position="673"/>
    </location>
</feature>
<feature type="disulfide bond" evidence="1">
    <location>
        <begin position="991"/>
        <end position="1034"/>
    </location>
</feature>
<feature type="disulfide bond" evidence="1">
    <location>
        <begin position="995"/>
        <end position="1039"/>
    </location>
</feature>
<feature type="disulfide bond" evidence="1">
    <location>
        <begin position="1006"/>
        <end position="1023"/>
    </location>
</feature>
<reference key="1">
    <citation type="journal article" date="2002" name="Gene Expr. Patterns">
        <title>Sexually dimorphic gene expression in the developing mouse gonad.</title>
        <authorList>
            <person name="Menke D.B."/>
            <person name="Page D.C."/>
        </authorList>
    </citation>
    <scope>NUCLEOTIDE SEQUENCE [MRNA]</scope>
    <source>
        <strain>C57BL/6J</strain>
        <tissue>Ovary</tissue>
    </source>
</reference>
<reference key="2">
    <citation type="journal article" date="2020" name="Nat. Genet.">
        <title>Loss of ADAMTS19 causes progressive non-syndromic heart valve disease.</title>
        <authorList>
            <consortium name="MIBAVA Leducq Consortium principal investigators"/>
            <person name="Wuennemann F."/>
            <person name="Ta-Shma A."/>
            <person name="Preuss C."/>
            <person name="Leclerc S."/>
            <person name="van Vliet P.P."/>
            <person name="Oneglia A."/>
            <person name="Thibeault M."/>
            <person name="Nordquist E."/>
            <person name="Lincoln J."/>
            <person name="Scharfenberg F."/>
            <person name="Becker-Pauly C."/>
            <person name="Hofmann P."/>
            <person name="Hoff K."/>
            <person name="Audain E."/>
            <person name="Kramer H.H."/>
            <person name="Makalowski W."/>
            <person name="Nir A."/>
            <person name="Gerety S.S."/>
            <person name="Hurles M."/>
            <person name="Comes J."/>
            <person name="Fournier A."/>
            <person name="Osinska H."/>
            <person name="Robins J."/>
            <person name="Puceat M."/>
            <person name="Elpeleg O."/>
            <person name="Hitz M.P."/>
            <person name="Andelfinger G."/>
        </authorList>
    </citation>
    <scope>DISRUPTION PHENOTYPE</scope>
</reference>
<comment type="cofactor">
    <cofactor evidence="1">
        <name>Zn(2+)</name>
        <dbReference type="ChEBI" id="CHEBI:29105"/>
    </cofactor>
    <text evidence="1">Binds 1 zinc ion per subunit.</text>
</comment>
<comment type="subcellular location">
    <subcellularLocation>
        <location evidence="1">Secreted</location>
        <location evidence="1">Extracellular space</location>
        <location evidence="1">Extracellular matrix</location>
    </subcellularLocation>
</comment>
<comment type="tissue specificity">
    <text>Expressed predominantly in fetal ovary, low levels of expression is also detected in kidney, heart, skeletal muscle, lung and testis.</text>
</comment>
<comment type="developmental stage">
    <text>Expression is strongest in anterior and ventral regions of the ovary at 12.5 and 13.5 dpc before becoming more uniform.</text>
</comment>
<comment type="domain">
    <text>The conserved cysteine present in the cysteine-switch motif binds the catalytic zinc ion, thus inhibiting the enzyme. The dissociation of the cysteine from the zinc ion upon the activation-peptide release activates the enzyme.</text>
</comment>
<comment type="PTM">
    <text evidence="1">The precursor is cleaved by a furin endopeptidase.</text>
</comment>
<comment type="PTM">
    <text evidence="1">Glycosylated. Can be O-fucosylated by POFUT2 on a serine or a threonine residue found within the consensus sequence C1-X(2)-(S/T)-C2-G of the TSP type-1 repeat domains where C1 and C2 are the first and second cysteine residue of the repeat, respectively. Fucosylated repeats can then be further glycosylated by the addition of a beta-1,3-glucose residue by the glucosyltransferase, B3GALTL. Fucosylation mediates the efficient secretion of ADAMTS family members. Can also be C-glycosylated with one or two mannose molecules on tryptophan residues within the consensus sequence W-X-X-W of the TPRs, and N-glycosylated. These other glycosylations can also facilitate secretion (By similarity).</text>
</comment>
<comment type="disruption phenotype">
    <text evidence="8">Homozygous knockout mice are viable, fertile and born in Mendelian ratios. Echocardiographic analysis reveals progressive aortic valve disease, without dysfunction in any of other valves. Valve defects range from aortic regurgitation to severe aortic valve stenosis, or a combination of both. Dysfunctional aortic valves show thickening of the commissures with reduced opening of the valve, occasionally in a 'fish mouth' pattern with only 2 visible commissures, reminiscent of fused bicuspid aortic valves in humans. The extracellular matrix is disorganized throughout the aortic valve leaflets, with significant thickening at the hinge region of the leaflets and increased collagen deposition covering the raphe. There is no evidence of valve calcification.</text>
</comment>
<comment type="caution">
    <text evidence="9">By homology with the human sequence, it is uncertain whether Met-1 or Met-5 is the initiator.</text>
</comment>
<name>ATS19_MOUSE</name>
<dbReference type="EC" id="3.4.24.-"/>
<dbReference type="EMBL" id="AY135183">
    <property type="protein sequence ID" value="AAN10155.1"/>
    <property type="molecule type" value="mRNA"/>
</dbReference>
<dbReference type="CCDS" id="CCDS29266.1"/>
<dbReference type="RefSeq" id="NP_780715.1">
    <property type="nucleotide sequence ID" value="NM_175506.4"/>
</dbReference>
<dbReference type="SMR" id="P59509"/>
<dbReference type="BioGRID" id="232190">
    <property type="interactions" value="2"/>
</dbReference>
<dbReference type="FunCoup" id="P59509">
    <property type="interactions" value="57"/>
</dbReference>
<dbReference type="STRING" id="10090.ENSMUSP00000050535"/>
<dbReference type="MEROPS" id="M12.029"/>
<dbReference type="GlyCosmos" id="P59509">
    <property type="glycosylation" value="7 sites, No reported glycans"/>
</dbReference>
<dbReference type="GlyGen" id="P59509">
    <property type="glycosylation" value="7 sites, 3 N-linked glycans (3 sites)"/>
</dbReference>
<dbReference type="iPTMnet" id="P59509"/>
<dbReference type="PhosphoSitePlus" id="P59509"/>
<dbReference type="SwissPalm" id="P59509"/>
<dbReference type="jPOST" id="P59509"/>
<dbReference type="PaxDb" id="10090-ENSMUSP00000050535"/>
<dbReference type="ProteomicsDB" id="277225"/>
<dbReference type="Antibodypedia" id="52899">
    <property type="antibodies" value="124 antibodies from 20 providers"/>
</dbReference>
<dbReference type="DNASU" id="240322"/>
<dbReference type="Ensembl" id="ENSMUST00000052907.7">
    <property type="protein sequence ID" value="ENSMUSP00000050535.6"/>
    <property type="gene ID" value="ENSMUSG00000053441.6"/>
</dbReference>
<dbReference type="GeneID" id="240322"/>
<dbReference type="KEGG" id="mmu:240322"/>
<dbReference type="UCSC" id="uc008ezs.1">
    <property type="organism name" value="mouse"/>
</dbReference>
<dbReference type="AGR" id="MGI:2442875"/>
<dbReference type="CTD" id="171019"/>
<dbReference type="MGI" id="MGI:2442875">
    <property type="gene designation" value="Adamts19"/>
</dbReference>
<dbReference type="VEuPathDB" id="HostDB:ENSMUSG00000053441"/>
<dbReference type="eggNOG" id="KOG3538">
    <property type="taxonomic scope" value="Eukaryota"/>
</dbReference>
<dbReference type="GeneTree" id="ENSGT00940000161018"/>
<dbReference type="HOGENOM" id="CLU_000660_8_1_1"/>
<dbReference type="InParanoid" id="P59509"/>
<dbReference type="OMA" id="QHAEPDG"/>
<dbReference type="OrthoDB" id="10035764at2759"/>
<dbReference type="PhylomeDB" id="P59509"/>
<dbReference type="TreeFam" id="TF313537"/>
<dbReference type="Reactome" id="R-MMU-5173214">
    <property type="pathway name" value="O-glycosylation of TSR domain-containing proteins"/>
</dbReference>
<dbReference type="BioGRID-ORCS" id="240322">
    <property type="hits" value="0 hits in 79 CRISPR screens"/>
</dbReference>
<dbReference type="ChiTaRS" id="Adamts19">
    <property type="organism name" value="mouse"/>
</dbReference>
<dbReference type="PRO" id="PR:P59509"/>
<dbReference type="Proteomes" id="UP000000589">
    <property type="component" value="Chromosome 18"/>
</dbReference>
<dbReference type="RNAct" id="P59509">
    <property type="molecule type" value="protein"/>
</dbReference>
<dbReference type="Bgee" id="ENSMUSG00000053441">
    <property type="expression patterns" value="Expressed in mesentery of stomach and 64 other cell types or tissues"/>
</dbReference>
<dbReference type="GO" id="GO:0005576">
    <property type="term" value="C:extracellular region"/>
    <property type="evidence" value="ECO:0007669"/>
    <property type="project" value="UniProtKB-KW"/>
</dbReference>
<dbReference type="GO" id="GO:0046872">
    <property type="term" value="F:metal ion binding"/>
    <property type="evidence" value="ECO:0007669"/>
    <property type="project" value="UniProtKB-KW"/>
</dbReference>
<dbReference type="GO" id="GO:0004222">
    <property type="term" value="F:metalloendopeptidase activity"/>
    <property type="evidence" value="ECO:0007669"/>
    <property type="project" value="InterPro"/>
</dbReference>
<dbReference type="GO" id="GO:0003180">
    <property type="term" value="P:aortic valve morphogenesis"/>
    <property type="evidence" value="ECO:0000315"/>
    <property type="project" value="BHF-UCL"/>
</dbReference>
<dbReference type="GO" id="GO:0030199">
    <property type="term" value="P:collagen fibril organization"/>
    <property type="evidence" value="ECO:0000315"/>
    <property type="project" value="BHF-UCL"/>
</dbReference>
<dbReference type="GO" id="GO:0006508">
    <property type="term" value="P:proteolysis"/>
    <property type="evidence" value="ECO:0007669"/>
    <property type="project" value="UniProtKB-KW"/>
</dbReference>
<dbReference type="CDD" id="cd04273">
    <property type="entry name" value="ZnMc_ADAMTS_like"/>
    <property type="match status" value="1"/>
</dbReference>
<dbReference type="FunFam" id="2.60.120.830:FF:000001">
    <property type="entry name" value="A disintegrin and metalloproteinase with thrombospondin motifs 1"/>
    <property type="match status" value="1"/>
</dbReference>
<dbReference type="FunFam" id="3.40.390.10:FF:000001">
    <property type="entry name" value="A disintegrin and metalloproteinase with thrombospondin motifs 1"/>
    <property type="match status" value="1"/>
</dbReference>
<dbReference type="FunFam" id="2.20.100.10:FF:000005">
    <property type="entry name" value="ADAM metallopeptidase with thrombospondin type 1 motif 9"/>
    <property type="match status" value="1"/>
</dbReference>
<dbReference type="Gene3D" id="2.60.120.830">
    <property type="match status" value="1"/>
</dbReference>
<dbReference type="Gene3D" id="3.40.1620.60">
    <property type="match status" value="1"/>
</dbReference>
<dbReference type="Gene3D" id="3.40.390.10">
    <property type="entry name" value="Collagenase (Catalytic Domain)"/>
    <property type="match status" value="1"/>
</dbReference>
<dbReference type="Gene3D" id="2.20.100.10">
    <property type="entry name" value="Thrombospondin type-1 (TSP1) repeat"/>
    <property type="match status" value="5"/>
</dbReference>
<dbReference type="InterPro" id="IPR006586">
    <property type="entry name" value="ADAM_Cys-rich"/>
</dbReference>
<dbReference type="InterPro" id="IPR013273">
    <property type="entry name" value="ADAMTS/ADAMTS-like"/>
</dbReference>
<dbReference type="InterPro" id="IPR056270">
    <property type="entry name" value="ADAMTS17/19_C"/>
</dbReference>
<dbReference type="InterPro" id="IPR050439">
    <property type="entry name" value="ADAMTS_ADAMTS-like"/>
</dbReference>
<dbReference type="InterPro" id="IPR041645">
    <property type="entry name" value="ADAMTS_CR_2"/>
</dbReference>
<dbReference type="InterPro" id="IPR010294">
    <property type="entry name" value="ADAMTS_spacer1"/>
</dbReference>
<dbReference type="InterPro" id="IPR024079">
    <property type="entry name" value="MetalloPept_cat_dom_sf"/>
</dbReference>
<dbReference type="InterPro" id="IPR001590">
    <property type="entry name" value="Peptidase_M12B"/>
</dbReference>
<dbReference type="InterPro" id="IPR002870">
    <property type="entry name" value="Peptidase_M12B_N"/>
</dbReference>
<dbReference type="InterPro" id="IPR010909">
    <property type="entry name" value="PLAC"/>
</dbReference>
<dbReference type="InterPro" id="IPR000884">
    <property type="entry name" value="TSP1_rpt"/>
</dbReference>
<dbReference type="InterPro" id="IPR036383">
    <property type="entry name" value="TSP1_rpt_sf"/>
</dbReference>
<dbReference type="PANTHER" id="PTHR13723:SF197">
    <property type="entry name" value="A DISINTEGRIN AND METALLOPROTEINASE WITH THROMBOSPONDIN MOTIFS 19"/>
    <property type="match status" value="1"/>
</dbReference>
<dbReference type="PANTHER" id="PTHR13723">
    <property type="entry name" value="ADAMTS A DISINTEGRIN AND METALLOPROTEASE WITH THROMBOSPONDIN MOTIFS PROTEASE"/>
    <property type="match status" value="1"/>
</dbReference>
<dbReference type="Pfam" id="PF23178">
    <property type="entry name" value="ADAMTS_C"/>
    <property type="match status" value="1"/>
</dbReference>
<dbReference type="Pfam" id="PF17771">
    <property type="entry name" value="ADAMTS_CR_2"/>
    <property type="match status" value="1"/>
</dbReference>
<dbReference type="Pfam" id="PF05986">
    <property type="entry name" value="ADAMTS_spacer1"/>
    <property type="match status" value="1"/>
</dbReference>
<dbReference type="Pfam" id="PF01562">
    <property type="entry name" value="Pep_M12B_propep"/>
    <property type="match status" value="1"/>
</dbReference>
<dbReference type="Pfam" id="PF01421">
    <property type="entry name" value="Reprolysin"/>
    <property type="match status" value="1"/>
</dbReference>
<dbReference type="Pfam" id="PF19030">
    <property type="entry name" value="TSP1_ADAMTS"/>
    <property type="match status" value="4"/>
</dbReference>
<dbReference type="Pfam" id="PF00090">
    <property type="entry name" value="TSP_1"/>
    <property type="match status" value="1"/>
</dbReference>
<dbReference type="PRINTS" id="PR01857">
    <property type="entry name" value="ADAMTSFAMILY"/>
</dbReference>
<dbReference type="SMART" id="SM00608">
    <property type="entry name" value="ACR"/>
    <property type="match status" value="1"/>
</dbReference>
<dbReference type="SMART" id="SM00209">
    <property type="entry name" value="TSP1"/>
    <property type="match status" value="5"/>
</dbReference>
<dbReference type="SUPFAM" id="SSF55486">
    <property type="entry name" value="Metalloproteases ('zincins'), catalytic domain"/>
    <property type="match status" value="1"/>
</dbReference>
<dbReference type="SUPFAM" id="SSF82895">
    <property type="entry name" value="TSP-1 type 1 repeat"/>
    <property type="match status" value="5"/>
</dbReference>
<dbReference type="PROSITE" id="PS50215">
    <property type="entry name" value="ADAM_MEPRO"/>
    <property type="match status" value="1"/>
</dbReference>
<dbReference type="PROSITE" id="PS50900">
    <property type="entry name" value="PLAC"/>
    <property type="match status" value="1"/>
</dbReference>
<dbReference type="PROSITE" id="PS50092">
    <property type="entry name" value="TSP1"/>
    <property type="match status" value="5"/>
</dbReference>
<dbReference type="PROSITE" id="PS00142">
    <property type="entry name" value="ZINC_PROTEASE"/>
    <property type="match status" value="1"/>
</dbReference>
<protein>
    <recommendedName>
        <fullName>A disintegrin and metalloproteinase with thrombospondin motifs 19</fullName>
        <shortName>ADAM-TS 19</shortName>
        <shortName>ADAM-TS19</shortName>
        <shortName>ADAMTS-19</shortName>
        <ecNumber>3.4.24.-</ecNumber>
    </recommendedName>
</protein>
<organism>
    <name type="scientific">Mus musculus</name>
    <name type="common">Mouse</name>
    <dbReference type="NCBI Taxonomy" id="10090"/>
    <lineage>
        <taxon>Eukaryota</taxon>
        <taxon>Metazoa</taxon>
        <taxon>Chordata</taxon>
        <taxon>Craniata</taxon>
        <taxon>Vertebrata</taxon>
        <taxon>Euteleostomi</taxon>
        <taxon>Mammalia</taxon>
        <taxon>Eutheria</taxon>
        <taxon>Euarchontoglires</taxon>
        <taxon>Glires</taxon>
        <taxon>Rodentia</taxon>
        <taxon>Myomorpha</taxon>
        <taxon>Muroidea</taxon>
        <taxon>Muridae</taxon>
        <taxon>Murinae</taxon>
        <taxon>Mus</taxon>
        <taxon>Mus</taxon>
    </lineage>
</organism>
<proteinExistence type="evidence at transcript level"/>
<evidence type="ECO:0000250" key="1"/>
<evidence type="ECO:0000255" key="2"/>
<evidence type="ECO:0000255" key="3">
    <source>
        <dbReference type="PROSITE-ProRule" id="PRU00210"/>
    </source>
</evidence>
<evidence type="ECO:0000255" key="4">
    <source>
        <dbReference type="PROSITE-ProRule" id="PRU00233"/>
    </source>
</evidence>
<evidence type="ECO:0000255" key="5">
    <source>
        <dbReference type="PROSITE-ProRule" id="PRU00276"/>
    </source>
</evidence>
<evidence type="ECO:0000255" key="6">
    <source>
        <dbReference type="PROSITE-ProRule" id="PRU10095"/>
    </source>
</evidence>
<evidence type="ECO:0000256" key="7">
    <source>
        <dbReference type="SAM" id="MobiDB-lite"/>
    </source>
</evidence>
<evidence type="ECO:0000269" key="8">
    <source>
    </source>
</evidence>
<evidence type="ECO:0000305" key="9"/>
<keyword id="KW-0165">Cleavage on pair of basic residues</keyword>
<keyword id="KW-1015">Disulfide bond</keyword>
<keyword id="KW-0272">Extracellular matrix</keyword>
<keyword id="KW-0325">Glycoprotein</keyword>
<keyword id="KW-0378">Hydrolase</keyword>
<keyword id="KW-0479">Metal-binding</keyword>
<keyword id="KW-0482">Metalloprotease</keyword>
<keyword id="KW-0645">Protease</keyword>
<keyword id="KW-1185">Reference proteome</keyword>
<keyword id="KW-0677">Repeat</keyword>
<keyword id="KW-0964">Secreted</keyword>
<keyword id="KW-0732">Signal</keyword>
<keyword id="KW-0862">Zinc</keyword>
<keyword id="KW-0865">Zymogen</keyword>
<sequence>MGPEMRLTRICCCCCLLYQLGFLSHGTTSGLQLTPDLEEWEVVFPALWRRESLNATGLSGGSSDPGSGRSSGGGGRGQASGSSREVRSVARAPQEEATRGQSEPWFGSPLEPGAEDEEELESQELPRGSSGDTALSSGTPASWQPPLPPQRPSSPPPAQQEEPSAEEVLLRIPALSRDLYLLLRRDGRFLAQRFAVEQWPKPGPDPTRATADPGSSLLPDASCFYTGTVLRHPGSLASFSTCGGGLMGFIQLNEDFLFIEPFNDTMAIIGHPHRLYRQKRSTEEKVTENSAVHRHHCGVISDKGRPRSKKIADNRREKRYSYKLSQEYNIETVVVADPAMVSYHGADAARRFILTILNMVFNLFQHKSLGVQVNLRVLKLILLHETPADLYIGHHGEKMLESFCKWQHEEFGRRNDVHLEMSTSWGEDIAAVDAAILITRKDFCVHKDEPCDTVGIAYLNGMCSEKRKCIIAEDNGLNLAFTIAHEMGHNMGINHDNDHPSCADGLHIMSGEWIKGQNLGDVSWSRCSKEDLERFLRSKASSCLLHTDPQSLSSVLVPSKLPGMAYTADEQCQILFGPLASFCQEMQHVICTGLWCKVEGEAECRTKLDPPMDGTDCDPGKWCKAGECTRRTPAPEHLAGEWSPWSSCSRSCSSGVSSRERKCPGLGSEARDCNGPRKQYRICENPPCPAGLPGFRDWQCQAYSVRTSYPKHALQWQAVFDEEKPCALFCSPVGKEQPVLLSEKVMDGTSCGYQGLDICANGRCQKAGCDGLLGSLAREDHCGVCNGNGKSCKVIKGDFNHTRGAGYVEVLVIPAGARRIKVVEEKPAHSFLALRDASKQSINSDWKIEHSGAFSLAGTTVHYLRRGLWEKISAKGPTTTPLHLLVLLFQDQNYGLHYEYTVPSDPLPDNQSSKEPGPLFMWTHAGWGDCNATCGGGERKTMVSCTKIMSKNISLVDNKKCKDLTKPEPQIRKCNEQPCQTRWMMTEWTTCSRTCGKGVQSRQVACTQQLENGTLIRAWERDCLGPKPATVQRCEGQDCMTVWEAGVWSECSVKCGKGVRHRTVRCTNPRKKCVLSTRPREAEDCEDYSKCYVWRVGDWSKCSITCGKGMQSRVIQCMHKITGRHGNECFSSEKPAAYRPCHLQPCNEKINVNTITSPRLAALTFKCLGDQWPVYCRVIREKNLCQDMRWYQRCCETCRDFYAQKLQQKS</sequence>
<accession>P59509</accession>
<gene>
    <name type="primary">Adamts19</name>
</gene>